<proteinExistence type="evidence at transcript level"/>
<evidence type="ECO:0000255" key="1"/>
<evidence type="ECO:0000305" key="2"/>
<gene>
    <name type="primary">lafL</name>
    <name type="synonym">lafF</name>
    <name type="ordered locus">VPA1554</name>
</gene>
<keyword id="KW-0997">Cell inner membrane</keyword>
<keyword id="KW-1003">Cell membrane</keyword>
<keyword id="KW-0145">Chemotaxis</keyword>
<keyword id="KW-0283">Flagellar rotation</keyword>
<keyword id="KW-0472">Membrane</keyword>
<keyword id="KW-0812">Transmembrane</keyword>
<keyword id="KW-1133">Transmembrane helix</keyword>
<reference key="1">
    <citation type="submission" date="1996-03" db="EMBL/GenBank/DDBJ databases">
        <title>The lateral flagellar hierarchy of gene expression.</title>
        <authorList>
            <person name="McCarter L.L."/>
            <person name="Noack D."/>
        </authorList>
    </citation>
    <scope>NUCLEOTIDE SEQUENCE [GENOMIC DNA]</scope>
    <source>
        <strain>BB22</strain>
    </source>
</reference>
<reference key="2">
    <citation type="journal article" date="2003" name="Lancet">
        <title>Genome sequence of Vibrio parahaemolyticus: a pathogenic mechanism distinct from that of V. cholerae.</title>
        <authorList>
            <person name="Makino K."/>
            <person name="Oshima K."/>
            <person name="Kurokawa K."/>
            <person name="Yokoyama K."/>
            <person name="Uda T."/>
            <person name="Tagomori K."/>
            <person name="Iijima Y."/>
            <person name="Najima M."/>
            <person name="Nakano M."/>
            <person name="Yamashita A."/>
            <person name="Kubota Y."/>
            <person name="Kimura S."/>
            <person name="Yasunaga T."/>
            <person name="Honda T."/>
            <person name="Shinagawa H."/>
            <person name="Hattori M."/>
            <person name="Iida T."/>
        </authorList>
    </citation>
    <scope>NUCLEOTIDE SEQUENCE [LARGE SCALE GENOMIC DNA]</scope>
    <source>
        <strain>RIMD 2210633</strain>
    </source>
</reference>
<reference key="3">
    <citation type="journal article" date="1993" name="J. Bacteriol.">
        <title>Identification of genes encoding components of the swarmer cell flagellar motor and propeller and a sigma factor controlling differentiation of Vibrio parahaemolyticus.</title>
        <authorList>
            <person name="McCarter L.L."/>
            <person name="Wright M.E."/>
        </authorList>
    </citation>
    <scope>NUCLEOTIDE SEQUENCE [GENOMIC DNA] OF 95-166</scope>
    <source>
        <strain>BB22</strain>
    </source>
</reference>
<feature type="chain" id="PRO_0000180920" description="Flagellar protein LafL">
    <location>
        <begin position="1"/>
        <end position="166"/>
    </location>
</feature>
<feature type="transmembrane region" description="Helical" evidence="1">
    <location>
        <begin position="6"/>
        <end position="26"/>
    </location>
</feature>
<protein>
    <recommendedName>
        <fullName>Flagellar protein LafL</fullName>
    </recommendedName>
</protein>
<comment type="function">
    <text>Controls the rotational direction of flagella during chemotaxis.</text>
</comment>
<comment type="subcellular location">
    <subcellularLocation>
        <location evidence="2">Cell inner membrane</location>
        <topology evidence="2">Single-pass membrane protein</topology>
    </subcellularLocation>
</comment>
<comment type="induction">
    <text>Under conditions in which the polar flagellum is not functional.</text>
</comment>
<comment type="similarity">
    <text evidence="2">Belongs to the FliL family.</text>
</comment>
<dbReference type="EMBL" id="U52957">
    <property type="protein sequence ID" value="AAB07355.1"/>
    <property type="molecule type" value="Genomic_DNA"/>
</dbReference>
<dbReference type="EMBL" id="BA000032">
    <property type="protein sequence ID" value="BAC62897.1"/>
    <property type="molecule type" value="Genomic_DNA"/>
</dbReference>
<dbReference type="EMBL" id="U20541">
    <property type="protein sequence ID" value="AAA62352.1"/>
    <property type="molecule type" value="Genomic_DNA"/>
</dbReference>
<dbReference type="PIR" id="G40590">
    <property type="entry name" value="G40590"/>
</dbReference>
<dbReference type="RefSeq" id="NP_801064.1">
    <property type="nucleotide sequence ID" value="NC_004605.1"/>
</dbReference>
<dbReference type="RefSeq" id="WP_005462773.1">
    <property type="nucleotide sequence ID" value="NC_004605.1"/>
</dbReference>
<dbReference type="SMR" id="Q03476"/>
<dbReference type="GeneID" id="1192250"/>
<dbReference type="KEGG" id="vpa:VPA1554"/>
<dbReference type="PATRIC" id="fig|223926.6.peg.4476"/>
<dbReference type="eggNOG" id="COG1580">
    <property type="taxonomic scope" value="Bacteria"/>
</dbReference>
<dbReference type="HOGENOM" id="CLU_099018_7_0_6"/>
<dbReference type="Proteomes" id="UP000002493">
    <property type="component" value="Chromosome 2"/>
</dbReference>
<dbReference type="GO" id="GO:0009425">
    <property type="term" value="C:bacterial-type flagellum basal body"/>
    <property type="evidence" value="ECO:0007669"/>
    <property type="project" value="InterPro"/>
</dbReference>
<dbReference type="GO" id="GO:0005886">
    <property type="term" value="C:plasma membrane"/>
    <property type="evidence" value="ECO:0007669"/>
    <property type="project" value="UniProtKB-SubCell"/>
</dbReference>
<dbReference type="GO" id="GO:0071978">
    <property type="term" value="P:bacterial-type flagellum-dependent swarming motility"/>
    <property type="evidence" value="ECO:0007669"/>
    <property type="project" value="TreeGrafter"/>
</dbReference>
<dbReference type="GO" id="GO:0006935">
    <property type="term" value="P:chemotaxis"/>
    <property type="evidence" value="ECO:0007669"/>
    <property type="project" value="UniProtKB-KW"/>
</dbReference>
<dbReference type="InterPro" id="IPR005503">
    <property type="entry name" value="FliL"/>
</dbReference>
<dbReference type="PANTHER" id="PTHR35091">
    <property type="entry name" value="FLAGELLAR PROTEIN FLIL"/>
    <property type="match status" value="1"/>
</dbReference>
<dbReference type="PANTHER" id="PTHR35091:SF2">
    <property type="entry name" value="FLAGELLAR PROTEIN FLIL"/>
    <property type="match status" value="1"/>
</dbReference>
<dbReference type="Pfam" id="PF03748">
    <property type="entry name" value="FliL"/>
    <property type="match status" value="1"/>
</dbReference>
<sequence length="166" mass="18665">MTKQQMIAMFIAMIITSALVSAATIMGGIWYLNKQAQDSGETSSLLENSPLSFLVTEQPTSKGPSFHPLDKVVLSIKGKKQTHFVMLELAIETRRPERIKDIDNYMPMVQNSLLKLFSDKTFDELQQTGAIDILQNEVKQTLLVAFAKTDIVRDIDDVLLTKYVVQ</sequence>
<name>LAFL_VIBPA</name>
<organism>
    <name type="scientific">Vibrio parahaemolyticus serotype O3:K6 (strain RIMD 2210633)</name>
    <dbReference type="NCBI Taxonomy" id="223926"/>
    <lineage>
        <taxon>Bacteria</taxon>
        <taxon>Pseudomonadati</taxon>
        <taxon>Pseudomonadota</taxon>
        <taxon>Gammaproteobacteria</taxon>
        <taxon>Vibrionales</taxon>
        <taxon>Vibrionaceae</taxon>
        <taxon>Vibrio</taxon>
    </lineage>
</organism>
<accession>Q03476</accession>
<accession>P74953</accession>